<feature type="chain" id="PRO_0000176673" description="Large ribosomal subunit protein bL9">
    <location>
        <begin position="1"/>
        <end position="149"/>
    </location>
</feature>
<organism>
    <name type="scientific">Salmonella typhimurium (strain LT2 / SGSC1412 / ATCC 700720)</name>
    <dbReference type="NCBI Taxonomy" id="99287"/>
    <lineage>
        <taxon>Bacteria</taxon>
        <taxon>Pseudomonadati</taxon>
        <taxon>Pseudomonadota</taxon>
        <taxon>Gammaproteobacteria</taxon>
        <taxon>Enterobacterales</taxon>
        <taxon>Enterobacteriaceae</taxon>
        <taxon>Salmonella</taxon>
    </lineage>
</organism>
<reference key="1">
    <citation type="journal article" date="2001" name="Nature">
        <title>Complete genome sequence of Salmonella enterica serovar Typhimurium LT2.</title>
        <authorList>
            <person name="McClelland M."/>
            <person name="Sanderson K.E."/>
            <person name="Spieth J."/>
            <person name="Clifton S.W."/>
            <person name="Latreille P."/>
            <person name="Courtney L."/>
            <person name="Porwollik S."/>
            <person name="Ali J."/>
            <person name="Dante M."/>
            <person name="Du F."/>
            <person name="Hou S."/>
            <person name="Layman D."/>
            <person name="Leonard S."/>
            <person name="Nguyen C."/>
            <person name="Scott K."/>
            <person name="Holmes A."/>
            <person name="Grewal N."/>
            <person name="Mulvaney E."/>
            <person name="Ryan E."/>
            <person name="Sun H."/>
            <person name="Florea L."/>
            <person name="Miller W."/>
            <person name="Stoneking T."/>
            <person name="Nhan M."/>
            <person name="Waterston R."/>
            <person name="Wilson R.K."/>
        </authorList>
    </citation>
    <scope>NUCLEOTIDE SEQUENCE [LARGE SCALE GENOMIC DNA]</scope>
    <source>
        <strain>LT2 / SGSC1412 / ATCC 700720</strain>
    </source>
</reference>
<keyword id="KW-1185">Reference proteome</keyword>
<keyword id="KW-0687">Ribonucleoprotein</keyword>
<keyword id="KW-0689">Ribosomal protein</keyword>
<keyword id="KW-0694">RNA-binding</keyword>
<keyword id="KW-0699">rRNA-binding</keyword>
<comment type="function">
    <text evidence="1">Binds to the 23S rRNA.</text>
</comment>
<comment type="similarity">
    <text evidence="1">Belongs to the bacterial ribosomal protein bL9 family.</text>
</comment>
<accession>Q8ZK80</accession>
<protein>
    <recommendedName>
        <fullName evidence="1">Large ribosomal subunit protein bL9</fullName>
    </recommendedName>
    <alternativeName>
        <fullName evidence="2">50S ribosomal protein L9</fullName>
    </alternativeName>
</protein>
<gene>
    <name evidence="1" type="primary">rplI</name>
    <name type="ordered locus">STM4394</name>
</gene>
<evidence type="ECO:0000255" key="1">
    <source>
        <dbReference type="HAMAP-Rule" id="MF_00503"/>
    </source>
</evidence>
<evidence type="ECO:0000305" key="2"/>
<proteinExistence type="inferred from homology"/>
<dbReference type="EMBL" id="AE006468">
    <property type="protein sequence ID" value="AAL23214.1"/>
    <property type="molecule type" value="Genomic_DNA"/>
</dbReference>
<dbReference type="RefSeq" id="NP_463255.1">
    <property type="nucleotide sequence ID" value="NC_003197.2"/>
</dbReference>
<dbReference type="RefSeq" id="WP_001196059.1">
    <property type="nucleotide sequence ID" value="NC_003197.2"/>
</dbReference>
<dbReference type="SMR" id="Q8ZK80"/>
<dbReference type="STRING" id="99287.STM4394"/>
<dbReference type="PaxDb" id="99287-STM4394"/>
<dbReference type="GeneID" id="1255920"/>
<dbReference type="KEGG" id="stm:STM4394"/>
<dbReference type="PATRIC" id="fig|99287.12.peg.4619"/>
<dbReference type="HOGENOM" id="CLU_078938_4_1_6"/>
<dbReference type="OMA" id="FAIRWTK"/>
<dbReference type="PhylomeDB" id="Q8ZK80"/>
<dbReference type="BioCyc" id="SENT99287:STM4394-MONOMER"/>
<dbReference type="Proteomes" id="UP000001014">
    <property type="component" value="Chromosome"/>
</dbReference>
<dbReference type="GO" id="GO:0022625">
    <property type="term" value="C:cytosolic large ribosomal subunit"/>
    <property type="evidence" value="ECO:0000318"/>
    <property type="project" value="GO_Central"/>
</dbReference>
<dbReference type="GO" id="GO:0019843">
    <property type="term" value="F:rRNA binding"/>
    <property type="evidence" value="ECO:0007669"/>
    <property type="project" value="UniProtKB-UniRule"/>
</dbReference>
<dbReference type="GO" id="GO:0003735">
    <property type="term" value="F:structural constituent of ribosome"/>
    <property type="evidence" value="ECO:0007669"/>
    <property type="project" value="InterPro"/>
</dbReference>
<dbReference type="GO" id="GO:0006412">
    <property type="term" value="P:translation"/>
    <property type="evidence" value="ECO:0007669"/>
    <property type="project" value="UniProtKB-UniRule"/>
</dbReference>
<dbReference type="FunFam" id="3.10.430.100:FF:000001">
    <property type="entry name" value="50S ribosomal protein L9"/>
    <property type="match status" value="1"/>
</dbReference>
<dbReference type="FunFam" id="3.40.5.10:FF:000001">
    <property type="entry name" value="50S ribosomal protein L9"/>
    <property type="match status" value="1"/>
</dbReference>
<dbReference type="Gene3D" id="3.10.430.100">
    <property type="entry name" value="Ribosomal protein L9, C-terminal domain"/>
    <property type="match status" value="1"/>
</dbReference>
<dbReference type="Gene3D" id="3.40.5.10">
    <property type="entry name" value="Ribosomal protein L9, N-terminal domain"/>
    <property type="match status" value="1"/>
</dbReference>
<dbReference type="HAMAP" id="MF_00503">
    <property type="entry name" value="Ribosomal_bL9"/>
    <property type="match status" value="1"/>
</dbReference>
<dbReference type="InterPro" id="IPR000244">
    <property type="entry name" value="Ribosomal_bL9"/>
</dbReference>
<dbReference type="InterPro" id="IPR009027">
    <property type="entry name" value="Ribosomal_bL9/RNase_H1_N"/>
</dbReference>
<dbReference type="InterPro" id="IPR020594">
    <property type="entry name" value="Ribosomal_bL9_bac/chp"/>
</dbReference>
<dbReference type="InterPro" id="IPR020069">
    <property type="entry name" value="Ribosomal_bL9_C"/>
</dbReference>
<dbReference type="InterPro" id="IPR036791">
    <property type="entry name" value="Ribosomal_bL9_C_sf"/>
</dbReference>
<dbReference type="InterPro" id="IPR020070">
    <property type="entry name" value="Ribosomal_bL9_N"/>
</dbReference>
<dbReference type="InterPro" id="IPR036935">
    <property type="entry name" value="Ribosomal_bL9_N_sf"/>
</dbReference>
<dbReference type="NCBIfam" id="TIGR00158">
    <property type="entry name" value="L9"/>
    <property type="match status" value="1"/>
</dbReference>
<dbReference type="PANTHER" id="PTHR21368">
    <property type="entry name" value="50S RIBOSOMAL PROTEIN L9"/>
    <property type="match status" value="1"/>
</dbReference>
<dbReference type="Pfam" id="PF03948">
    <property type="entry name" value="Ribosomal_L9_C"/>
    <property type="match status" value="1"/>
</dbReference>
<dbReference type="Pfam" id="PF01281">
    <property type="entry name" value="Ribosomal_L9_N"/>
    <property type="match status" value="1"/>
</dbReference>
<dbReference type="SUPFAM" id="SSF55658">
    <property type="entry name" value="L9 N-domain-like"/>
    <property type="match status" value="1"/>
</dbReference>
<dbReference type="SUPFAM" id="SSF55653">
    <property type="entry name" value="Ribosomal protein L9 C-domain"/>
    <property type="match status" value="1"/>
</dbReference>
<dbReference type="PROSITE" id="PS00651">
    <property type="entry name" value="RIBOSOMAL_L9"/>
    <property type="match status" value="1"/>
</dbReference>
<sequence length="149" mass="15784">MQVILLDKVANLGSLGDQVNVKAGYARNFLVPKGKAVPATKKNVEYFEARRAELEAKLADVLAAANARAEKINALETVTIASKAGDEGKLFGSIGTRDIADAVTAAGVDVAKSEVRLPNGVLRTTGEHEVNFQVHSEVFAKVIINVVAE</sequence>
<name>RL9_SALTY</name>